<evidence type="ECO:0000255" key="1">
    <source>
        <dbReference type="HAMAP-Rule" id="MF_01859"/>
    </source>
</evidence>
<organism>
    <name type="scientific">Salmonella paratyphi B (strain ATCC BAA-1250 / SPB7)</name>
    <dbReference type="NCBI Taxonomy" id="1016998"/>
    <lineage>
        <taxon>Bacteria</taxon>
        <taxon>Pseudomonadati</taxon>
        <taxon>Pseudomonadota</taxon>
        <taxon>Gammaproteobacteria</taxon>
        <taxon>Enterobacterales</taxon>
        <taxon>Enterobacteriaceae</taxon>
        <taxon>Salmonella</taxon>
    </lineage>
</organism>
<protein>
    <recommendedName>
        <fullName evidence="1">Ribosomal RNA large subunit methyltransferase G</fullName>
        <ecNumber evidence="1">2.1.1.174</ecNumber>
    </recommendedName>
    <alternativeName>
        <fullName evidence="1">23S rRNA m2G1835 methyltransferase</fullName>
    </alternativeName>
    <alternativeName>
        <fullName evidence="1">rRNA (guanine-N(2)-)-methyltransferase RlmG</fullName>
    </alternativeName>
</protein>
<sequence length="378" mass="42300">MSHVDDGFRSLTLKRFPQTDDVNPLLAWEAADEYLLQQLDETEIRGPVLILNDTFGALSCALAEHSPYSIGDSYLSELGTRENLRHNGIAESSVTFLDSTADYPQAPGVVLIKVPKTLALLEQQLRALRKVVTVQTRIIAGAKARDIHTSTLELFEKVLGPTTTTLAWKKARLINCTFSHPQLADAPQTLSWKLEDTGWTIHNHANVFSRTGLDIGARFFMQHLPENLDGEIVDLGCGNGVIGLSLLAKNPQANVVFVDESPMAVDSSRLNVETNLPEAFERCEFMINNALSGVEPFRFNAVFCNPPFHQKHALTDNIAWEMFHHARRCLKINGELYIVANRHLDYFHKLKKIFGNCATIATNNKFVILKAVKQGRRR</sequence>
<keyword id="KW-0963">Cytoplasm</keyword>
<keyword id="KW-0489">Methyltransferase</keyword>
<keyword id="KW-0698">rRNA processing</keyword>
<keyword id="KW-0949">S-adenosyl-L-methionine</keyword>
<keyword id="KW-0808">Transferase</keyword>
<comment type="function">
    <text evidence="1">Specifically methylates the guanine in position 1835 (m2G1835) of 23S rRNA.</text>
</comment>
<comment type="catalytic activity">
    <reaction evidence="1">
        <text>guanosine(1835) in 23S rRNA + S-adenosyl-L-methionine = N(2)-methylguanosine(1835) in 23S rRNA + S-adenosyl-L-homocysteine + H(+)</text>
        <dbReference type="Rhea" id="RHEA:42744"/>
        <dbReference type="Rhea" id="RHEA-COMP:10217"/>
        <dbReference type="Rhea" id="RHEA-COMP:10218"/>
        <dbReference type="ChEBI" id="CHEBI:15378"/>
        <dbReference type="ChEBI" id="CHEBI:57856"/>
        <dbReference type="ChEBI" id="CHEBI:59789"/>
        <dbReference type="ChEBI" id="CHEBI:74269"/>
        <dbReference type="ChEBI" id="CHEBI:74481"/>
        <dbReference type="EC" id="2.1.1.174"/>
    </reaction>
</comment>
<comment type="subcellular location">
    <subcellularLocation>
        <location evidence="1">Cytoplasm</location>
    </subcellularLocation>
</comment>
<comment type="similarity">
    <text evidence="1">Belongs to the methyltransferase superfamily. RlmG family.</text>
</comment>
<reference key="1">
    <citation type="submission" date="2007-11" db="EMBL/GenBank/DDBJ databases">
        <authorList>
            <consortium name="The Salmonella enterica serovar Paratyphi B Genome Sequencing Project"/>
            <person name="McClelland M."/>
            <person name="Sanderson E.K."/>
            <person name="Porwollik S."/>
            <person name="Spieth J."/>
            <person name="Clifton W.S."/>
            <person name="Fulton R."/>
            <person name="Cordes M."/>
            <person name="Wollam A."/>
            <person name="Shah N."/>
            <person name="Pepin K."/>
            <person name="Bhonagiri V."/>
            <person name="Nash W."/>
            <person name="Johnson M."/>
            <person name="Thiruvilangam P."/>
            <person name="Wilson R."/>
        </authorList>
    </citation>
    <scope>NUCLEOTIDE SEQUENCE [LARGE SCALE GENOMIC DNA]</scope>
    <source>
        <strain>ATCC BAA-1250 / SPB7</strain>
    </source>
</reference>
<dbReference type="EC" id="2.1.1.174" evidence="1"/>
<dbReference type="EMBL" id="CP000886">
    <property type="protein sequence ID" value="ABX69347.1"/>
    <property type="molecule type" value="Genomic_DNA"/>
</dbReference>
<dbReference type="RefSeq" id="WP_000019998.1">
    <property type="nucleotide sequence ID" value="NC_010102.1"/>
</dbReference>
<dbReference type="SMR" id="A9N601"/>
<dbReference type="KEGG" id="spq:SPAB_04019"/>
<dbReference type="PATRIC" id="fig|1016998.12.peg.3788"/>
<dbReference type="HOGENOM" id="CLU_040288_4_0_6"/>
<dbReference type="BioCyc" id="SENT1016998:SPAB_RS16320-MONOMER"/>
<dbReference type="Proteomes" id="UP000008556">
    <property type="component" value="Chromosome"/>
</dbReference>
<dbReference type="GO" id="GO:0005737">
    <property type="term" value="C:cytoplasm"/>
    <property type="evidence" value="ECO:0007669"/>
    <property type="project" value="UniProtKB-SubCell"/>
</dbReference>
<dbReference type="GO" id="GO:0052916">
    <property type="term" value="F:23S rRNA (guanine(1835)-N(2))-methyltransferase activity"/>
    <property type="evidence" value="ECO:0007669"/>
    <property type="project" value="UniProtKB-EC"/>
</dbReference>
<dbReference type="GO" id="GO:0003676">
    <property type="term" value="F:nucleic acid binding"/>
    <property type="evidence" value="ECO:0007669"/>
    <property type="project" value="InterPro"/>
</dbReference>
<dbReference type="CDD" id="cd02440">
    <property type="entry name" value="AdoMet_MTases"/>
    <property type="match status" value="1"/>
</dbReference>
<dbReference type="FunFam" id="3.40.50.150:FF:000046">
    <property type="entry name" value="Ribosomal RNA large subunit methyltransferase G"/>
    <property type="match status" value="1"/>
</dbReference>
<dbReference type="FunFam" id="3.40.50.150:FF:000047">
    <property type="entry name" value="Ribosomal RNA large subunit methyltransferase G"/>
    <property type="match status" value="1"/>
</dbReference>
<dbReference type="Gene3D" id="3.40.50.150">
    <property type="entry name" value="Vaccinia Virus protein VP39"/>
    <property type="match status" value="2"/>
</dbReference>
<dbReference type="HAMAP" id="MF_01859">
    <property type="entry name" value="23SrRNA_methyltr_G"/>
    <property type="match status" value="1"/>
</dbReference>
<dbReference type="InterPro" id="IPR002052">
    <property type="entry name" value="DNA_methylase_N6_adenine_CS"/>
</dbReference>
<dbReference type="InterPro" id="IPR017237">
    <property type="entry name" value="rRNA_m2G-MeTrfase_RlmG"/>
</dbReference>
<dbReference type="InterPro" id="IPR046977">
    <property type="entry name" value="RsmC/RlmG"/>
</dbReference>
<dbReference type="InterPro" id="IPR029063">
    <property type="entry name" value="SAM-dependent_MTases_sf"/>
</dbReference>
<dbReference type="InterPro" id="IPR007848">
    <property type="entry name" value="Small_mtfrase_dom"/>
</dbReference>
<dbReference type="NCBIfam" id="NF011577">
    <property type="entry name" value="PRK15001.1"/>
    <property type="match status" value="1"/>
</dbReference>
<dbReference type="PANTHER" id="PTHR47816:SF5">
    <property type="entry name" value="RIBOSOMAL RNA LARGE SUBUNIT METHYLTRANSFERASE G"/>
    <property type="match status" value="1"/>
</dbReference>
<dbReference type="PANTHER" id="PTHR47816">
    <property type="entry name" value="RIBOSOMAL RNA SMALL SUBUNIT METHYLTRANSFERASE C"/>
    <property type="match status" value="1"/>
</dbReference>
<dbReference type="Pfam" id="PF05175">
    <property type="entry name" value="MTS"/>
    <property type="match status" value="1"/>
</dbReference>
<dbReference type="PIRSF" id="PIRSF037565">
    <property type="entry name" value="RRNA_m2G_Mtase_RsmD_prd"/>
    <property type="match status" value="1"/>
</dbReference>
<dbReference type="SUPFAM" id="SSF53335">
    <property type="entry name" value="S-adenosyl-L-methionine-dependent methyltransferases"/>
    <property type="match status" value="1"/>
</dbReference>
<feature type="chain" id="PRO_0000366499" description="Ribosomal RNA large subunit methyltransferase G">
    <location>
        <begin position="1"/>
        <end position="378"/>
    </location>
</feature>
<accession>A9N601</accession>
<proteinExistence type="inferred from homology"/>
<gene>
    <name evidence="1" type="primary">rlmG</name>
    <name type="ordered locus">SPAB_04019</name>
</gene>
<name>RLMG_SALPB</name>